<evidence type="ECO:0000303" key="1">
    <source>
    </source>
</evidence>
<evidence type="ECO:0000305" key="2"/>
<evidence type="ECO:0000312" key="3">
    <source>
        <dbReference type="HGNC" id="HGNC:23346"/>
    </source>
</evidence>
<name>LR74A_HUMAN</name>
<protein>
    <recommendedName>
        <fullName evidence="3">Leucine-rich repeat-containing protein 74A</fullName>
    </recommendedName>
    <alternativeName>
        <fullName evidence="3">Leucine-rich repeat-containing protein 74</fullName>
    </alternativeName>
</protein>
<proteinExistence type="evidence at protein level"/>
<comment type="alternative products">
    <event type="alternative splicing"/>
    <isoform>
        <id>Q0VAA2-1</id>
        <name>1</name>
        <sequence type="displayed"/>
    </isoform>
    <isoform>
        <id>Q0VAA2-2</id>
        <name>2</name>
        <sequence type="described" ref="VSP_028425 VSP_028426 VSP_028427"/>
    </isoform>
</comment>
<comment type="caution">
    <text evidence="2">It is uncertain whether Met-1 or Met-27 is the initiator.</text>
</comment>
<comment type="sequence caution" evidence="2">
    <conflict type="erroneous gene model prediction">
        <sequence resource="EMBL-CDS" id="AAD44364"/>
    </conflict>
</comment>
<comment type="sequence caution" evidence="2">
    <conflict type="erroneous initiation">
        <sequence resource="EMBL-CDS" id="AAI21160"/>
    </conflict>
    <text>Truncated N-terminus.</text>
</comment>
<comment type="sequence caution" evidence="2">
    <conflict type="erroneous initiation">
        <sequence resource="EMBL-CDS" id="AAI21161"/>
    </conflict>
    <text>Truncated N-terminus.</text>
</comment>
<comment type="sequence caution" evidence="2">
    <conflict type="erroneous gene model prediction">
        <sequence resource="EMBL-CDS" id="EAW81265"/>
    </conflict>
</comment>
<keyword id="KW-0025">Alternative splicing</keyword>
<keyword id="KW-0433">Leucine-rich repeat</keyword>
<keyword id="KW-1267">Proteomics identification</keyword>
<keyword id="KW-1185">Reference proteome</keyword>
<keyword id="KW-0677">Repeat</keyword>
<dbReference type="EMBL" id="AK125722">
    <property type="protein sequence ID" value="BAC86259.1"/>
    <property type="molecule type" value="mRNA"/>
</dbReference>
<dbReference type="EMBL" id="AF111169">
    <property type="protein sequence ID" value="AAD44364.1"/>
    <property type="status" value="ALT_SEQ"/>
    <property type="molecule type" value="Genomic_DNA"/>
</dbReference>
<dbReference type="EMBL" id="CH471061">
    <property type="protein sequence ID" value="EAW81265.1"/>
    <property type="status" value="ALT_SEQ"/>
    <property type="molecule type" value="Genomic_DNA"/>
</dbReference>
<dbReference type="EMBL" id="BC121159">
    <property type="protein sequence ID" value="AAI21160.1"/>
    <property type="status" value="ALT_INIT"/>
    <property type="molecule type" value="mRNA"/>
</dbReference>
<dbReference type="EMBL" id="BC121160">
    <property type="protein sequence ID" value="AAI21161.1"/>
    <property type="status" value="ALT_INIT"/>
    <property type="molecule type" value="mRNA"/>
</dbReference>
<dbReference type="CCDS" id="CCDS9853.2">
    <molecule id="Q0VAA2-1"/>
</dbReference>
<dbReference type="RefSeq" id="NP_919263.2">
    <molecule id="Q0VAA2-1"/>
    <property type="nucleotide sequence ID" value="NM_194287.3"/>
</dbReference>
<dbReference type="SMR" id="Q0VAA2"/>
<dbReference type="BioGRID" id="126917">
    <property type="interactions" value="4"/>
</dbReference>
<dbReference type="FunCoup" id="Q0VAA2">
    <property type="interactions" value="15"/>
</dbReference>
<dbReference type="IntAct" id="Q0VAA2">
    <property type="interactions" value="5"/>
</dbReference>
<dbReference type="MINT" id="Q0VAA2"/>
<dbReference type="STRING" id="9606.ENSP00000377369"/>
<dbReference type="GlyGen" id="Q0VAA2">
    <property type="glycosylation" value="1 site, 1 O-linked glycan (1 site)"/>
</dbReference>
<dbReference type="iPTMnet" id="Q0VAA2"/>
<dbReference type="PhosphoSitePlus" id="Q0VAA2"/>
<dbReference type="BioMuta" id="LRRC74A"/>
<dbReference type="DMDM" id="308153427"/>
<dbReference type="jPOST" id="Q0VAA2"/>
<dbReference type="MassIVE" id="Q0VAA2"/>
<dbReference type="PaxDb" id="9606-ENSP00000377369"/>
<dbReference type="PeptideAtlas" id="Q0VAA2"/>
<dbReference type="ProteomicsDB" id="58787">
    <molecule id="Q0VAA2-1"/>
</dbReference>
<dbReference type="ProteomicsDB" id="58788">
    <molecule id="Q0VAA2-2"/>
</dbReference>
<dbReference type="Antibodypedia" id="25952">
    <property type="antibodies" value="25 antibodies from 12 providers"/>
</dbReference>
<dbReference type="DNASU" id="145497"/>
<dbReference type="Ensembl" id="ENST00000393774.7">
    <molecule id="Q0VAA2-1"/>
    <property type="protein sequence ID" value="ENSP00000377369.3"/>
    <property type="gene ID" value="ENSG00000100565.16"/>
</dbReference>
<dbReference type="GeneID" id="145497"/>
<dbReference type="KEGG" id="hsa:145497"/>
<dbReference type="UCSC" id="uc001xsx.3">
    <molecule id="Q0VAA2-1"/>
    <property type="organism name" value="human"/>
</dbReference>
<dbReference type="AGR" id="HGNC:23346"/>
<dbReference type="CTD" id="145497"/>
<dbReference type="DisGeNET" id="145497"/>
<dbReference type="GeneCards" id="LRRC74A"/>
<dbReference type="HGNC" id="HGNC:23346">
    <property type="gene designation" value="LRRC74A"/>
</dbReference>
<dbReference type="HPA" id="ENSG00000100565">
    <property type="expression patterns" value="Tissue enriched (testis)"/>
</dbReference>
<dbReference type="neXtProt" id="NX_Q0VAA2"/>
<dbReference type="OpenTargets" id="ENSG00000100565"/>
<dbReference type="PharmGKB" id="PA134862662"/>
<dbReference type="VEuPathDB" id="HostDB:ENSG00000100565"/>
<dbReference type="eggNOG" id="KOG4308">
    <property type="taxonomic scope" value="Eukaryota"/>
</dbReference>
<dbReference type="GeneTree" id="ENSGT00940000154297"/>
<dbReference type="HOGENOM" id="CLU_017147_3_2_1"/>
<dbReference type="InParanoid" id="Q0VAA2"/>
<dbReference type="OMA" id="PINRYQV"/>
<dbReference type="OrthoDB" id="120976at2759"/>
<dbReference type="PAN-GO" id="Q0VAA2">
    <property type="GO annotations" value="0 GO annotations based on evolutionary models"/>
</dbReference>
<dbReference type="PhylomeDB" id="Q0VAA2"/>
<dbReference type="TreeFam" id="TF329403"/>
<dbReference type="PathwayCommons" id="Q0VAA2"/>
<dbReference type="SignaLink" id="Q0VAA2"/>
<dbReference type="BioGRID-ORCS" id="145497">
    <property type="hits" value="15 hits in 1144 CRISPR screens"/>
</dbReference>
<dbReference type="ChiTaRS" id="LRRC74A">
    <property type="organism name" value="human"/>
</dbReference>
<dbReference type="GenomeRNAi" id="145497"/>
<dbReference type="Pharos" id="Q0VAA2">
    <property type="development level" value="Tdark"/>
</dbReference>
<dbReference type="PRO" id="PR:Q0VAA2"/>
<dbReference type="Proteomes" id="UP000005640">
    <property type="component" value="Chromosome 14"/>
</dbReference>
<dbReference type="RNAct" id="Q0VAA2">
    <property type="molecule type" value="protein"/>
</dbReference>
<dbReference type="Bgee" id="ENSG00000100565">
    <property type="expression patterns" value="Expressed in left testis and 73 other cell types or tissues"/>
</dbReference>
<dbReference type="ExpressionAtlas" id="Q0VAA2">
    <property type="expression patterns" value="baseline and differential"/>
</dbReference>
<dbReference type="Gene3D" id="3.80.10.10">
    <property type="entry name" value="Ribonuclease Inhibitor"/>
    <property type="match status" value="1"/>
</dbReference>
<dbReference type="InterPro" id="IPR001611">
    <property type="entry name" value="Leu-rich_rpt"/>
</dbReference>
<dbReference type="InterPro" id="IPR052394">
    <property type="entry name" value="LRR-containing"/>
</dbReference>
<dbReference type="InterPro" id="IPR032675">
    <property type="entry name" value="LRR_dom_sf"/>
</dbReference>
<dbReference type="PANTHER" id="PTHR24114">
    <property type="entry name" value="LEUCINE RICH REPEAT FAMILY PROTEIN"/>
    <property type="match status" value="1"/>
</dbReference>
<dbReference type="PANTHER" id="PTHR24114:SF49">
    <property type="entry name" value="LEUCINE-RICH REPEAT-CONTAINING PROTEIN 74A"/>
    <property type="match status" value="1"/>
</dbReference>
<dbReference type="Pfam" id="PF13516">
    <property type="entry name" value="LRR_6"/>
    <property type="match status" value="4"/>
</dbReference>
<dbReference type="SMART" id="SM00368">
    <property type="entry name" value="LRR_RI"/>
    <property type="match status" value="8"/>
</dbReference>
<dbReference type="SUPFAM" id="SSF52047">
    <property type="entry name" value="RNI-like"/>
    <property type="match status" value="1"/>
</dbReference>
<accession>Q0VAA2</accession>
<accession>Q6ZUG6</accession>
<accession>Q9Y627</accession>
<organism>
    <name type="scientific">Homo sapiens</name>
    <name type="common">Human</name>
    <dbReference type="NCBI Taxonomy" id="9606"/>
    <lineage>
        <taxon>Eukaryota</taxon>
        <taxon>Metazoa</taxon>
        <taxon>Chordata</taxon>
        <taxon>Craniata</taxon>
        <taxon>Vertebrata</taxon>
        <taxon>Euteleostomi</taxon>
        <taxon>Mammalia</taxon>
        <taxon>Eutheria</taxon>
        <taxon>Euarchontoglires</taxon>
        <taxon>Primates</taxon>
        <taxon>Haplorrhini</taxon>
        <taxon>Catarrhini</taxon>
        <taxon>Hominidae</taxon>
        <taxon>Homo</taxon>
    </lineage>
</organism>
<sequence length="488" mass="54535">MHIQFPSKPTLPRACWEGRITAGSPGMPPDEIEIEPVRQSSDKMLYCEAESPPTVEKVKPARENSETDLEIEDDEKFFTTGQKELYLEACKLMGVVPVSYFIRNMEESYVNLNHHGLGPRGTKAIAIALVSNMAVTKLELEDNCIMEEGVLSLVEMLQENYYLQEMNISNNHLGLEGARIISDFFERNSSSIWSLELSGNDFKEDSAALLCQALSTNYQIKKLDLSHNQFSDVGGEHLGQMLAINVGLTSLDLSWNNFHTRGAVALCNGLRGNVTLTKLDLSMNGFGNEVALALGEVLRLNRCLVYLDIGGNDIGNEGASKISKGLESNESLRVLKLFLNPINMDGAILLILAIKRNPKSRMEELDISNVLVSEQFMKTLDGVYAVHPQLDVVFKAVQGLSPKKTIFLLTNPMKLIQSYADQHKITIVDFFKSLNPTGTMKMSVDEFQKVMIEQNKVPLNQYQVREVIKKLDEKTGMVNFSFLNTMKP</sequence>
<feature type="chain" id="PRO_0000306172" description="Leucine-rich repeat-containing protein 74A">
    <location>
        <begin position="1"/>
        <end position="488"/>
    </location>
</feature>
<feature type="repeat" description="LRR 1">
    <location>
        <begin position="134"/>
        <end position="155"/>
    </location>
</feature>
<feature type="repeat" description="LRR 2">
    <location>
        <begin position="162"/>
        <end position="182"/>
    </location>
</feature>
<feature type="repeat" description="LRR 3">
    <location>
        <begin position="191"/>
        <end position="212"/>
    </location>
</feature>
<feature type="repeat" description="LRR 4">
    <location>
        <begin position="219"/>
        <end position="239"/>
    </location>
</feature>
<feature type="repeat" description="LRR 5">
    <location>
        <begin position="247"/>
        <end position="268"/>
    </location>
</feature>
<feature type="repeat" description="LRR 6">
    <location>
        <begin position="275"/>
        <end position="296"/>
    </location>
</feature>
<feature type="repeat" description="LRR 7">
    <location>
        <begin position="303"/>
        <end position="324"/>
    </location>
</feature>
<feature type="repeat" description="LRR 8">
    <location>
        <begin position="331"/>
        <end position="351"/>
    </location>
</feature>
<feature type="splice variant" id="VSP_028425" description="In isoform 2." evidence="1">
    <location>
        <begin position="1"/>
        <end position="92"/>
    </location>
</feature>
<feature type="splice variant" id="VSP_028426" description="In isoform 2." evidence="1">
    <original>NVTLTKLDLSMNGFGNEVALALGEVLRLNRCLVYLDIGG</original>
    <variation>KSSDSTAAWSTWISVAMTSAMKGPPKSAKDWNPMKASEF</variation>
    <location>
        <begin position="273"/>
        <end position="311"/>
    </location>
</feature>
<feature type="splice variant" id="VSP_028427" description="In isoform 2." evidence="1">
    <location>
        <begin position="312"/>
        <end position="488"/>
    </location>
</feature>
<gene>
    <name evidence="3" type="primary">LRRC74A</name>
    <name evidence="3" type="synonym">C14orf166B</name>
    <name evidence="3" type="synonym">LRRC74</name>
</gene>
<reference key="1">
    <citation type="journal article" date="2004" name="Nat. Genet.">
        <title>Complete sequencing and characterization of 21,243 full-length human cDNAs.</title>
        <authorList>
            <person name="Ota T."/>
            <person name="Suzuki Y."/>
            <person name="Nishikawa T."/>
            <person name="Otsuki T."/>
            <person name="Sugiyama T."/>
            <person name="Irie R."/>
            <person name="Wakamatsu A."/>
            <person name="Hayashi K."/>
            <person name="Sato H."/>
            <person name="Nagai K."/>
            <person name="Kimura K."/>
            <person name="Makita H."/>
            <person name="Sekine M."/>
            <person name="Obayashi M."/>
            <person name="Nishi T."/>
            <person name="Shibahara T."/>
            <person name="Tanaka T."/>
            <person name="Ishii S."/>
            <person name="Yamamoto J."/>
            <person name="Saito K."/>
            <person name="Kawai Y."/>
            <person name="Isono Y."/>
            <person name="Nakamura Y."/>
            <person name="Nagahari K."/>
            <person name="Murakami K."/>
            <person name="Yasuda T."/>
            <person name="Iwayanagi T."/>
            <person name="Wagatsuma M."/>
            <person name="Shiratori A."/>
            <person name="Sudo H."/>
            <person name="Hosoiri T."/>
            <person name="Kaku Y."/>
            <person name="Kodaira H."/>
            <person name="Kondo H."/>
            <person name="Sugawara M."/>
            <person name="Takahashi M."/>
            <person name="Kanda K."/>
            <person name="Yokoi T."/>
            <person name="Furuya T."/>
            <person name="Kikkawa E."/>
            <person name="Omura Y."/>
            <person name="Abe K."/>
            <person name="Kamihara K."/>
            <person name="Katsuta N."/>
            <person name="Sato K."/>
            <person name="Tanikawa M."/>
            <person name="Yamazaki M."/>
            <person name="Ninomiya K."/>
            <person name="Ishibashi T."/>
            <person name="Yamashita H."/>
            <person name="Murakawa K."/>
            <person name="Fujimori K."/>
            <person name="Tanai H."/>
            <person name="Kimata M."/>
            <person name="Watanabe M."/>
            <person name="Hiraoka S."/>
            <person name="Chiba Y."/>
            <person name="Ishida S."/>
            <person name="Ono Y."/>
            <person name="Takiguchi S."/>
            <person name="Watanabe S."/>
            <person name="Yosida M."/>
            <person name="Hotuta T."/>
            <person name="Kusano J."/>
            <person name="Kanehori K."/>
            <person name="Takahashi-Fujii A."/>
            <person name="Hara H."/>
            <person name="Tanase T.-O."/>
            <person name="Nomura Y."/>
            <person name="Togiya S."/>
            <person name="Komai F."/>
            <person name="Hara R."/>
            <person name="Takeuchi K."/>
            <person name="Arita M."/>
            <person name="Imose N."/>
            <person name="Musashino K."/>
            <person name="Yuuki H."/>
            <person name="Oshima A."/>
            <person name="Sasaki N."/>
            <person name="Aotsuka S."/>
            <person name="Yoshikawa Y."/>
            <person name="Matsunawa H."/>
            <person name="Ichihara T."/>
            <person name="Shiohata N."/>
            <person name="Sano S."/>
            <person name="Moriya S."/>
            <person name="Momiyama H."/>
            <person name="Satoh N."/>
            <person name="Takami S."/>
            <person name="Terashima Y."/>
            <person name="Suzuki O."/>
            <person name="Nakagawa S."/>
            <person name="Senoh A."/>
            <person name="Mizoguchi H."/>
            <person name="Goto Y."/>
            <person name="Shimizu F."/>
            <person name="Wakebe H."/>
            <person name="Hishigaki H."/>
            <person name="Watanabe T."/>
            <person name="Sugiyama A."/>
            <person name="Takemoto M."/>
            <person name="Kawakami B."/>
            <person name="Yamazaki M."/>
            <person name="Watanabe K."/>
            <person name="Kumagai A."/>
            <person name="Itakura S."/>
            <person name="Fukuzumi Y."/>
            <person name="Fujimori Y."/>
            <person name="Komiyama M."/>
            <person name="Tashiro H."/>
            <person name="Tanigami A."/>
            <person name="Fujiwara T."/>
            <person name="Ono T."/>
            <person name="Yamada K."/>
            <person name="Fujii Y."/>
            <person name="Ozaki K."/>
            <person name="Hirao M."/>
            <person name="Ohmori Y."/>
            <person name="Kawabata A."/>
            <person name="Hikiji T."/>
            <person name="Kobatake N."/>
            <person name="Inagaki H."/>
            <person name="Ikema Y."/>
            <person name="Okamoto S."/>
            <person name="Okitani R."/>
            <person name="Kawakami T."/>
            <person name="Noguchi S."/>
            <person name="Itoh T."/>
            <person name="Shigeta K."/>
            <person name="Senba T."/>
            <person name="Matsumura K."/>
            <person name="Nakajima Y."/>
            <person name="Mizuno T."/>
            <person name="Morinaga M."/>
            <person name="Sasaki M."/>
            <person name="Togashi T."/>
            <person name="Oyama M."/>
            <person name="Hata H."/>
            <person name="Watanabe M."/>
            <person name="Komatsu T."/>
            <person name="Mizushima-Sugano J."/>
            <person name="Satoh T."/>
            <person name="Shirai Y."/>
            <person name="Takahashi Y."/>
            <person name="Nakagawa K."/>
            <person name="Okumura K."/>
            <person name="Nagase T."/>
            <person name="Nomura N."/>
            <person name="Kikuchi H."/>
            <person name="Masuho Y."/>
            <person name="Yamashita R."/>
            <person name="Nakai K."/>
            <person name="Yada T."/>
            <person name="Nakamura Y."/>
            <person name="Ohara O."/>
            <person name="Isogai T."/>
            <person name="Sugano S."/>
        </authorList>
    </citation>
    <scope>NUCLEOTIDE SEQUENCE [LARGE SCALE MRNA] (ISOFORM 2)</scope>
    <source>
        <tissue>Testis</tissue>
    </source>
</reference>
<reference key="2">
    <citation type="journal article" date="2003" name="Nature">
        <title>The DNA sequence and analysis of human chromosome 14.</title>
        <authorList>
            <person name="Heilig R."/>
            <person name="Eckenberg R."/>
            <person name="Petit J.-L."/>
            <person name="Fonknechten N."/>
            <person name="Da Silva C."/>
            <person name="Cattolico L."/>
            <person name="Levy M."/>
            <person name="Barbe V."/>
            <person name="De Berardinis V."/>
            <person name="Ureta-Vidal A."/>
            <person name="Pelletier E."/>
            <person name="Vico V."/>
            <person name="Anthouard V."/>
            <person name="Rowen L."/>
            <person name="Madan A."/>
            <person name="Qin S."/>
            <person name="Sun H."/>
            <person name="Du H."/>
            <person name="Pepin K."/>
            <person name="Artiguenave F."/>
            <person name="Robert C."/>
            <person name="Cruaud C."/>
            <person name="Bruels T."/>
            <person name="Jaillon O."/>
            <person name="Friedlander L."/>
            <person name="Samson G."/>
            <person name="Brottier P."/>
            <person name="Cure S."/>
            <person name="Segurens B."/>
            <person name="Aniere F."/>
            <person name="Samain S."/>
            <person name="Crespeau H."/>
            <person name="Abbasi N."/>
            <person name="Aiach N."/>
            <person name="Boscus D."/>
            <person name="Dickhoff R."/>
            <person name="Dors M."/>
            <person name="Dubois I."/>
            <person name="Friedman C."/>
            <person name="Gouyvenoux M."/>
            <person name="James R."/>
            <person name="Madan A."/>
            <person name="Mairey-Estrada B."/>
            <person name="Mangenot S."/>
            <person name="Martins N."/>
            <person name="Menard M."/>
            <person name="Oztas S."/>
            <person name="Ratcliffe A."/>
            <person name="Shaffer T."/>
            <person name="Trask B."/>
            <person name="Vacherie B."/>
            <person name="Bellemere C."/>
            <person name="Belser C."/>
            <person name="Besnard-Gonnet M."/>
            <person name="Bartol-Mavel D."/>
            <person name="Boutard M."/>
            <person name="Briez-Silla S."/>
            <person name="Combette S."/>
            <person name="Dufosse-Laurent V."/>
            <person name="Ferron C."/>
            <person name="Lechaplais C."/>
            <person name="Louesse C."/>
            <person name="Muselet D."/>
            <person name="Magdelenat G."/>
            <person name="Pateau E."/>
            <person name="Petit E."/>
            <person name="Sirvain-Trukniewicz P."/>
            <person name="Trybou A."/>
            <person name="Vega-Czarny N."/>
            <person name="Bataille E."/>
            <person name="Bluet E."/>
            <person name="Bordelais I."/>
            <person name="Dubois M."/>
            <person name="Dumont C."/>
            <person name="Guerin T."/>
            <person name="Haffray S."/>
            <person name="Hammadi R."/>
            <person name="Muanga J."/>
            <person name="Pellouin V."/>
            <person name="Robert D."/>
            <person name="Wunderle E."/>
            <person name="Gauguet G."/>
            <person name="Roy A."/>
            <person name="Sainte-Marthe L."/>
            <person name="Verdier J."/>
            <person name="Verdier-Discala C."/>
            <person name="Hillier L.W."/>
            <person name="Fulton L."/>
            <person name="McPherson J."/>
            <person name="Matsuda F."/>
            <person name="Wilson R."/>
            <person name="Scarpelli C."/>
            <person name="Gyapay G."/>
            <person name="Wincker P."/>
            <person name="Saurin W."/>
            <person name="Quetier F."/>
            <person name="Waterston R."/>
            <person name="Hood L."/>
            <person name="Weissenbach J."/>
        </authorList>
    </citation>
    <scope>NUCLEOTIDE SEQUENCE [LARGE SCALE GENOMIC DNA]</scope>
</reference>
<reference key="3">
    <citation type="submission" date="2005-07" db="EMBL/GenBank/DDBJ databases">
        <authorList>
            <person name="Mural R.J."/>
            <person name="Istrail S."/>
            <person name="Sutton G.G."/>
            <person name="Florea L."/>
            <person name="Halpern A.L."/>
            <person name="Mobarry C.M."/>
            <person name="Lippert R."/>
            <person name="Walenz B."/>
            <person name="Shatkay H."/>
            <person name="Dew I."/>
            <person name="Miller J.R."/>
            <person name="Flanigan M.J."/>
            <person name="Edwards N.J."/>
            <person name="Bolanos R."/>
            <person name="Fasulo D."/>
            <person name="Halldorsson B.V."/>
            <person name="Hannenhalli S."/>
            <person name="Turner R."/>
            <person name="Yooseph S."/>
            <person name="Lu F."/>
            <person name="Nusskern D.R."/>
            <person name="Shue B.C."/>
            <person name="Zheng X.H."/>
            <person name="Zhong F."/>
            <person name="Delcher A.L."/>
            <person name="Huson D.H."/>
            <person name="Kravitz S.A."/>
            <person name="Mouchard L."/>
            <person name="Reinert K."/>
            <person name="Remington K.A."/>
            <person name="Clark A.G."/>
            <person name="Waterman M.S."/>
            <person name="Eichler E.E."/>
            <person name="Adams M.D."/>
            <person name="Hunkapiller M.W."/>
            <person name="Myers E.W."/>
            <person name="Venter J.C."/>
        </authorList>
    </citation>
    <scope>NUCLEOTIDE SEQUENCE [LARGE SCALE GENOMIC DNA]</scope>
</reference>
<reference key="4">
    <citation type="journal article" date="2004" name="Genome Res.">
        <title>The status, quality, and expansion of the NIH full-length cDNA project: the Mammalian Gene Collection (MGC).</title>
        <authorList>
            <consortium name="The MGC Project Team"/>
        </authorList>
    </citation>
    <scope>NUCLEOTIDE SEQUENCE [LARGE SCALE MRNA] OF 14-488 (ISOFORM 1)</scope>
</reference>